<dbReference type="EMBL" id="CP001279">
    <property type="protein sequence ID" value="ACM92937.1"/>
    <property type="molecule type" value="Genomic_DNA"/>
</dbReference>
<dbReference type="RefSeq" id="WP_015901989.1">
    <property type="nucleotide sequence ID" value="NC_012115.1"/>
</dbReference>
<dbReference type="SMR" id="B9L8Z0"/>
<dbReference type="STRING" id="598659.NAMH_0687"/>
<dbReference type="KEGG" id="nam:NAMH_0687"/>
<dbReference type="eggNOG" id="COG0443">
    <property type="taxonomic scope" value="Bacteria"/>
</dbReference>
<dbReference type="HOGENOM" id="CLU_005965_2_1_7"/>
<dbReference type="OrthoDB" id="9766019at2"/>
<dbReference type="Proteomes" id="UP000000448">
    <property type="component" value="Chromosome"/>
</dbReference>
<dbReference type="GO" id="GO:0005524">
    <property type="term" value="F:ATP binding"/>
    <property type="evidence" value="ECO:0007669"/>
    <property type="project" value="UniProtKB-UniRule"/>
</dbReference>
<dbReference type="GO" id="GO:0140662">
    <property type="term" value="F:ATP-dependent protein folding chaperone"/>
    <property type="evidence" value="ECO:0007669"/>
    <property type="project" value="InterPro"/>
</dbReference>
<dbReference type="GO" id="GO:0051082">
    <property type="term" value="F:unfolded protein binding"/>
    <property type="evidence" value="ECO:0007669"/>
    <property type="project" value="InterPro"/>
</dbReference>
<dbReference type="CDD" id="cd10234">
    <property type="entry name" value="ASKHA_NBD_HSP70_DnaK-like"/>
    <property type="match status" value="1"/>
</dbReference>
<dbReference type="FunFam" id="2.60.34.10:FF:000014">
    <property type="entry name" value="Chaperone protein DnaK HSP70"/>
    <property type="match status" value="1"/>
</dbReference>
<dbReference type="FunFam" id="3.30.420.40:FF:000004">
    <property type="entry name" value="Molecular chaperone DnaK"/>
    <property type="match status" value="1"/>
</dbReference>
<dbReference type="FunFam" id="3.90.640.10:FF:000003">
    <property type="entry name" value="Molecular chaperone DnaK"/>
    <property type="match status" value="1"/>
</dbReference>
<dbReference type="Gene3D" id="3.30.420.40">
    <property type="match status" value="2"/>
</dbReference>
<dbReference type="Gene3D" id="3.90.640.10">
    <property type="entry name" value="Actin, Chain A, domain 4"/>
    <property type="match status" value="1"/>
</dbReference>
<dbReference type="Gene3D" id="2.60.34.10">
    <property type="entry name" value="Substrate Binding Domain Of DNAk, Chain A, domain 1"/>
    <property type="match status" value="1"/>
</dbReference>
<dbReference type="HAMAP" id="MF_00332">
    <property type="entry name" value="DnaK"/>
    <property type="match status" value="1"/>
</dbReference>
<dbReference type="InterPro" id="IPR043129">
    <property type="entry name" value="ATPase_NBD"/>
</dbReference>
<dbReference type="InterPro" id="IPR012725">
    <property type="entry name" value="Chaperone_DnaK"/>
</dbReference>
<dbReference type="InterPro" id="IPR018181">
    <property type="entry name" value="Heat_shock_70_CS"/>
</dbReference>
<dbReference type="InterPro" id="IPR029047">
    <property type="entry name" value="HSP70_peptide-bd_sf"/>
</dbReference>
<dbReference type="InterPro" id="IPR013126">
    <property type="entry name" value="Hsp_70_fam"/>
</dbReference>
<dbReference type="NCBIfam" id="NF001413">
    <property type="entry name" value="PRK00290.1"/>
    <property type="match status" value="1"/>
</dbReference>
<dbReference type="NCBIfam" id="TIGR02350">
    <property type="entry name" value="prok_dnaK"/>
    <property type="match status" value="1"/>
</dbReference>
<dbReference type="PANTHER" id="PTHR19375">
    <property type="entry name" value="HEAT SHOCK PROTEIN 70KDA"/>
    <property type="match status" value="1"/>
</dbReference>
<dbReference type="Pfam" id="PF00012">
    <property type="entry name" value="HSP70"/>
    <property type="match status" value="1"/>
</dbReference>
<dbReference type="PRINTS" id="PR00301">
    <property type="entry name" value="HEATSHOCK70"/>
</dbReference>
<dbReference type="SUPFAM" id="SSF53067">
    <property type="entry name" value="Actin-like ATPase domain"/>
    <property type="match status" value="2"/>
</dbReference>
<dbReference type="SUPFAM" id="SSF100920">
    <property type="entry name" value="Heat shock protein 70kD (HSP70), peptide-binding domain"/>
    <property type="match status" value="1"/>
</dbReference>
<dbReference type="PROSITE" id="PS00297">
    <property type="entry name" value="HSP70_1"/>
    <property type="match status" value="1"/>
</dbReference>
<dbReference type="PROSITE" id="PS00329">
    <property type="entry name" value="HSP70_2"/>
    <property type="match status" value="1"/>
</dbReference>
<dbReference type="PROSITE" id="PS01036">
    <property type="entry name" value="HSP70_3"/>
    <property type="match status" value="1"/>
</dbReference>
<evidence type="ECO:0000255" key="1">
    <source>
        <dbReference type="HAMAP-Rule" id="MF_00332"/>
    </source>
</evidence>
<evidence type="ECO:0000256" key="2">
    <source>
        <dbReference type="SAM" id="MobiDB-lite"/>
    </source>
</evidence>
<keyword id="KW-0067">ATP-binding</keyword>
<keyword id="KW-0143">Chaperone</keyword>
<keyword id="KW-0547">Nucleotide-binding</keyword>
<keyword id="KW-0597">Phosphoprotein</keyword>
<keyword id="KW-0346">Stress response</keyword>
<accession>B9L8Z0</accession>
<name>DNAK_NAUPA</name>
<reference key="1">
    <citation type="journal article" date="2009" name="PLoS Genet.">
        <title>Adaptations to submarine hydrothermal environments exemplified by the genome of Nautilia profundicola.</title>
        <authorList>
            <person name="Campbell B.J."/>
            <person name="Smith J.L."/>
            <person name="Hanson T.E."/>
            <person name="Klotz M.G."/>
            <person name="Stein L.Y."/>
            <person name="Lee C.K."/>
            <person name="Wu D."/>
            <person name="Robinson J.M."/>
            <person name="Khouri H.M."/>
            <person name="Eisen J.A."/>
            <person name="Cary S.C."/>
        </authorList>
    </citation>
    <scope>NUCLEOTIDE SEQUENCE [LARGE SCALE GENOMIC DNA]</scope>
    <source>
        <strain>ATCC BAA-1463 / DSM 18972 / AmH</strain>
    </source>
</reference>
<protein>
    <recommendedName>
        <fullName evidence="1">Chaperone protein DnaK</fullName>
    </recommendedName>
    <alternativeName>
        <fullName evidence="1">HSP70</fullName>
    </alternativeName>
    <alternativeName>
        <fullName evidence="1">Heat shock 70 kDa protein</fullName>
    </alternativeName>
    <alternativeName>
        <fullName evidence="1">Heat shock protein 70</fullName>
    </alternativeName>
</protein>
<gene>
    <name evidence="1" type="primary">dnaK</name>
    <name type="ordered locus">NAMH_0687</name>
</gene>
<sequence>MGKVIGIDLGTTNSAMAYYDGKDAKIIANKEGRNTTPSVVAFTDKGEVLVGEPAKRQAITNPERTIYSVKRIMGMMCNEPKAQEAKKHVQYKIVDKNGACAVEVDGKVYTPQEISAKILMKLKKDAEEFFGEEVTEAVITVPAYFNDSQRKATQEAGKIAGLNVLRIINEPTAAALAYGLDKKGEEKILVYDLGGGTFDVTVLEIGDGTFQVLATDGNAFLGGDDFDNRIVDWLISEFKAETGIDLSQDKMALQRLKDAAEQAKKELSTKEETEINLPFITADASGPKHLVKKLTRAKFEAMIDDLLQETLRHIDTALEDAGLSKDEIDEIVMVGGSTRIPKVQELVSNYFNGKKLNKSVNPDEVVALGAAIQAGVLKGDVKDVLLLDVTPLSLGIETLGGVMTKIIEKGTTIPVKKSQVFSTAEDNQTAVTIHVLQGEAELAKDNKSLGQFNLEGIPPAPRGVPQIEVTFDIDANGVLNVSAKDKTSGKEQKITITGSSTLSEEEIERMVREAEEANRKEKARIEAIKARNELDAVAYQAEKFINDNKDKLGDVSALEAKIKEAKELIEQQSEDKAKIEALKNEINTELQNVAQNMAQQQQAQGGAQQQNQNKGGDDDVIDAEVE</sequence>
<organism>
    <name type="scientific">Nautilia profundicola (strain ATCC BAA-1463 / DSM 18972 / AmH)</name>
    <dbReference type="NCBI Taxonomy" id="598659"/>
    <lineage>
        <taxon>Bacteria</taxon>
        <taxon>Pseudomonadati</taxon>
        <taxon>Campylobacterota</taxon>
        <taxon>Epsilonproteobacteria</taxon>
        <taxon>Nautiliales</taxon>
        <taxon>Nautiliaceae</taxon>
        <taxon>Nautilia</taxon>
    </lineage>
</organism>
<feature type="chain" id="PRO_1000133157" description="Chaperone protein DnaK">
    <location>
        <begin position="1"/>
        <end position="626"/>
    </location>
</feature>
<feature type="region of interest" description="Disordered" evidence="2">
    <location>
        <begin position="595"/>
        <end position="626"/>
    </location>
</feature>
<feature type="compositionally biased region" description="Low complexity" evidence="2">
    <location>
        <begin position="595"/>
        <end position="614"/>
    </location>
</feature>
<feature type="modified residue" description="Phosphothreonine; by autocatalysis" evidence="1">
    <location>
        <position position="197"/>
    </location>
</feature>
<proteinExistence type="inferred from homology"/>
<comment type="function">
    <text evidence="1">Acts as a chaperone.</text>
</comment>
<comment type="induction">
    <text evidence="1">By stress conditions e.g. heat shock.</text>
</comment>
<comment type="similarity">
    <text evidence="1">Belongs to the heat shock protein 70 family.</text>
</comment>